<dbReference type="EC" id="3.6.-.-" evidence="1"/>
<dbReference type="EMBL" id="CP000557">
    <property type="protein sequence ID" value="ABO68775.1"/>
    <property type="molecule type" value="Genomic_DNA"/>
</dbReference>
<dbReference type="RefSeq" id="WP_008880828.1">
    <property type="nucleotide sequence ID" value="NC_009328.1"/>
</dbReference>
<dbReference type="SMR" id="A4ITX1"/>
<dbReference type="KEGG" id="gtn:GTNG_3440"/>
<dbReference type="eggNOG" id="COG0486">
    <property type="taxonomic scope" value="Bacteria"/>
</dbReference>
<dbReference type="HOGENOM" id="CLU_019624_4_1_9"/>
<dbReference type="Proteomes" id="UP000001578">
    <property type="component" value="Chromosome"/>
</dbReference>
<dbReference type="GO" id="GO:0005829">
    <property type="term" value="C:cytosol"/>
    <property type="evidence" value="ECO:0007669"/>
    <property type="project" value="TreeGrafter"/>
</dbReference>
<dbReference type="GO" id="GO:0005525">
    <property type="term" value="F:GTP binding"/>
    <property type="evidence" value="ECO:0007669"/>
    <property type="project" value="UniProtKB-UniRule"/>
</dbReference>
<dbReference type="GO" id="GO:0003924">
    <property type="term" value="F:GTPase activity"/>
    <property type="evidence" value="ECO:0007669"/>
    <property type="project" value="UniProtKB-UniRule"/>
</dbReference>
<dbReference type="GO" id="GO:0046872">
    <property type="term" value="F:metal ion binding"/>
    <property type="evidence" value="ECO:0007669"/>
    <property type="project" value="UniProtKB-KW"/>
</dbReference>
<dbReference type="GO" id="GO:0030488">
    <property type="term" value="P:tRNA methylation"/>
    <property type="evidence" value="ECO:0007669"/>
    <property type="project" value="TreeGrafter"/>
</dbReference>
<dbReference type="GO" id="GO:0002098">
    <property type="term" value="P:tRNA wobble uridine modification"/>
    <property type="evidence" value="ECO:0007669"/>
    <property type="project" value="TreeGrafter"/>
</dbReference>
<dbReference type="CDD" id="cd04164">
    <property type="entry name" value="trmE"/>
    <property type="match status" value="1"/>
</dbReference>
<dbReference type="CDD" id="cd14858">
    <property type="entry name" value="TrmE_N"/>
    <property type="match status" value="1"/>
</dbReference>
<dbReference type="FunFam" id="3.30.1360.120:FF:000003">
    <property type="entry name" value="tRNA modification GTPase MnmE"/>
    <property type="match status" value="1"/>
</dbReference>
<dbReference type="FunFam" id="3.40.50.300:FF:000494">
    <property type="entry name" value="tRNA modification GTPase MnmE"/>
    <property type="match status" value="1"/>
</dbReference>
<dbReference type="Gene3D" id="3.40.50.300">
    <property type="entry name" value="P-loop containing nucleotide triphosphate hydrolases"/>
    <property type="match status" value="1"/>
</dbReference>
<dbReference type="Gene3D" id="3.30.1360.120">
    <property type="entry name" value="Probable tRNA modification gtpase trme, domain 1"/>
    <property type="match status" value="1"/>
</dbReference>
<dbReference type="Gene3D" id="1.20.120.430">
    <property type="entry name" value="tRNA modification GTPase MnmE domain 2"/>
    <property type="match status" value="1"/>
</dbReference>
<dbReference type="HAMAP" id="MF_00379">
    <property type="entry name" value="GTPase_MnmE"/>
    <property type="match status" value="1"/>
</dbReference>
<dbReference type="InterPro" id="IPR031168">
    <property type="entry name" value="G_TrmE"/>
</dbReference>
<dbReference type="InterPro" id="IPR006073">
    <property type="entry name" value="GTP-bd"/>
</dbReference>
<dbReference type="InterPro" id="IPR018948">
    <property type="entry name" value="GTP-bd_TrmE_N"/>
</dbReference>
<dbReference type="InterPro" id="IPR004520">
    <property type="entry name" value="GTPase_MnmE"/>
</dbReference>
<dbReference type="InterPro" id="IPR027368">
    <property type="entry name" value="MnmE_dom2"/>
</dbReference>
<dbReference type="InterPro" id="IPR025867">
    <property type="entry name" value="MnmE_helical"/>
</dbReference>
<dbReference type="InterPro" id="IPR027417">
    <property type="entry name" value="P-loop_NTPase"/>
</dbReference>
<dbReference type="InterPro" id="IPR005225">
    <property type="entry name" value="Small_GTP-bd"/>
</dbReference>
<dbReference type="InterPro" id="IPR027266">
    <property type="entry name" value="TrmE/GcvT_dom1"/>
</dbReference>
<dbReference type="NCBIfam" id="TIGR00450">
    <property type="entry name" value="mnmE_trmE_thdF"/>
    <property type="match status" value="1"/>
</dbReference>
<dbReference type="NCBIfam" id="NF003661">
    <property type="entry name" value="PRK05291.1-3"/>
    <property type="match status" value="1"/>
</dbReference>
<dbReference type="NCBIfam" id="TIGR00231">
    <property type="entry name" value="small_GTP"/>
    <property type="match status" value="1"/>
</dbReference>
<dbReference type="PANTHER" id="PTHR42714">
    <property type="entry name" value="TRNA MODIFICATION GTPASE GTPBP3"/>
    <property type="match status" value="1"/>
</dbReference>
<dbReference type="PANTHER" id="PTHR42714:SF2">
    <property type="entry name" value="TRNA MODIFICATION GTPASE GTPBP3, MITOCHONDRIAL"/>
    <property type="match status" value="1"/>
</dbReference>
<dbReference type="Pfam" id="PF01926">
    <property type="entry name" value="MMR_HSR1"/>
    <property type="match status" value="1"/>
</dbReference>
<dbReference type="Pfam" id="PF12631">
    <property type="entry name" value="MnmE_helical"/>
    <property type="match status" value="1"/>
</dbReference>
<dbReference type="Pfam" id="PF10396">
    <property type="entry name" value="TrmE_N"/>
    <property type="match status" value="1"/>
</dbReference>
<dbReference type="PRINTS" id="PR00449">
    <property type="entry name" value="RASTRNSFRMNG"/>
</dbReference>
<dbReference type="SUPFAM" id="SSF52540">
    <property type="entry name" value="P-loop containing nucleoside triphosphate hydrolases"/>
    <property type="match status" value="1"/>
</dbReference>
<dbReference type="SUPFAM" id="SSF116878">
    <property type="entry name" value="TrmE connector domain"/>
    <property type="match status" value="1"/>
</dbReference>
<dbReference type="PROSITE" id="PS51709">
    <property type="entry name" value="G_TRME"/>
    <property type="match status" value="1"/>
</dbReference>
<protein>
    <recommendedName>
        <fullName evidence="1">tRNA modification GTPase MnmE</fullName>
        <ecNumber evidence="1">3.6.-.-</ecNumber>
    </recommendedName>
</protein>
<proteinExistence type="inferred from homology"/>
<evidence type="ECO:0000255" key="1">
    <source>
        <dbReference type="HAMAP-Rule" id="MF_00379"/>
    </source>
</evidence>
<organism>
    <name type="scientific">Geobacillus thermodenitrificans (strain NG80-2)</name>
    <dbReference type="NCBI Taxonomy" id="420246"/>
    <lineage>
        <taxon>Bacteria</taxon>
        <taxon>Bacillati</taxon>
        <taxon>Bacillota</taxon>
        <taxon>Bacilli</taxon>
        <taxon>Bacillales</taxon>
        <taxon>Anoxybacillaceae</taxon>
        <taxon>Geobacillus</taxon>
    </lineage>
</organism>
<accession>A4ITX1</accession>
<sequence length="462" mass="51264">MTEFDTIAAISTPMGEGAIAIVRLSGDEAVEIADRLFRSPTGKQLKDVPSHTIHYGHIVDPKSGRIVEEVMVSVMRAPKTFTREDVVEINCHGGFVSVNRVLQLVLANGARLAEPGEFTKRAFLNGRIDLSQAEAVIDLIRAKTDRAMNVALQQMEGRLSKLIRELRQTILETLAHVEVNIDYPEYDDVEEMTPRLLKEKAEYVRGQIEKLLSTATQGKILREGLATVIIGRPNVGKSSLLNALAHENRAIVTDIPGTTRDVIEEYVNVRGVPLRLIDTAGIRETEDIVERIGVERSRQMLKKADLILLVLNYHEPLTEEDERLFAMTEGMDVIVIVNKTDLPQNIDIERVKELAAGRPIVATSLLCERGIDELEKAIADLFFGGELEAGDLTYVSNSRHIALLEQAKKAIEDALSGIDVGMPVDLVQIDLRRAWELLGEIVGDTVHESLIDQLFAQFCLGK</sequence>
<feature type="chain" id="PRO_1000048829" description="tRNA modification GTPase MnmE">
    <location>
        <begin position="1"/>
        <end position="462"/>
    </location>
</feature>
<feature type="domain" description="TrmE-type G">
    <location>
        <begin position="224"/>
        <end position="383"/>
    </location>
</feature>
<feature type="binding site" evidence="1">
    <location>
        <position position="23"/>
    </location>
    <ligand>
        <name>(6S)-5-formyl-5,6,7,8-tetrahydrofolate</name>
        <dbReference type="ChEBI" id="CHEBI:57457"/>
    </ligand>
</feature>
<feature type="binding site" evidence="1">
    <location>
        <position position="88"/>
    </location>
    <ligand>
        <name>(6S)-5-formyl-5,6,7,8-tetrahydrofolate</name>
        <dbReference type="ChEBI" id="CHEBI:57457"/>
    </ligand>
</feature>
<feature type="binding site" evidence="1">
    <location>
        <position position="127"/>
    </location>
    <ligand>
        <name>(6S)-5-formyl-5,6,7,8-tetrahydrofolate</name>
        <dbReference type="ChEBI" id="CHEBI:57457"/>
    </ligand>
</feature>
<feature type="binding site" evidence="1">
    <location>
        <begin position="234"/>
        <end position="239"/>
    </location>
    <ligand>
        <name>GTP</name>
        <dbReference type="ChEBI" id="CHEBI:37565"/>
    </ligand>
</feature>
<feature type="binding site" evidence="1">
    <location>
        <position position="234"/>
    </location>
    <ligand>
        <name>K(+)</name>
        <dbReference type="ChEBI" id="CHEBI:29103"/>
    </ligand>
</feature>
<feature type="binding site" evidence="1">
    <location>
        <position position="238"/>
    </location>
    <ligand>
        <name>Mg(2+)</name>
        <dbReference type="ChEBI" id="CHEBI:18420"/>
    </ligand>
</feature>
<feature type="binding site" evidence="1">
    <location>
        <begin position="253"/>
        <end position="259"/>
    </location>
    <ligand>
        <name>GTP</name>
        <dbReference type="ChEBI" id="CHEBI:37565"/>
    </ligand>
</feature>
<feature type="binding site" evidence="1">
    <location>
        <position position="253"/>
    </location>
    <ligand>
        <name>K(+)</name>
        <dbReference type="ChEBI" id="CHEBI:29103"/>
    </ligand>
</feature>
<feature type="binding site" evidence="1">
    <location>
        <position position="255"/>
    </location>
    <ligand>
        <name>K(+)</name>
        <dbReference type="ChEBI" id="CHEBI:29103"/>
    </ligand>
</feature>
<feature type="binding site" evidence="1">
    <location>
        <position position="258"/>
    </location>
    <ligand>
        <name>K(+)</name>
        <dbReference type="ChEBI" id="CHEBI:29103"/>
    </ligand>
</feature>
<feature type="binding site" evidence="1">
    <location>
        <position position="259"/>
    </location>
    <ligand>
        <name>Mg(2+)</name>
        <dbReference type="ChEBI" id="CHEBI:18420"/>
    </ligand>
</feature>
<feature type="binding site" evidence="1">
    <location>
        <begin position="278"/>
        <end position="281"/>
    </location>
    <ligand>
        <name>GTP</name>
        <dbReference type="ChEBI" id="CHEBI:37565"/>
    </ligand>
</feature>
<feature type="binding site" evidence="1">
    <location>
        <position position="462"/>
    </location>
    <ligand>
        <name>(6S)-5-formyl-5,6,7,8-tetrahydrofolate</name>
        <dbReference type="ChEBI" id="CHEBI:57457"/>
    </ligand>
</feature>
<comment type="function">
    <text evidence="1">Exhibits a very high intrinsic GTPase hydrolysis rate. Involved in the addition of a carboxymethylaminomethyl (cmnm) group at the wobble position (U34) of certain tRNAs, forming tRNA-cmnm(5)s(2)U34.</text>
</comment>
<comment type="cofactor">
    <cofactor evidence="1">
        <name>K(+)</name>
        <dbReference type="ChEBI" id="CHEBI:29103"/>
    </cofactor>
    <text evidence="1">Binds 1 potassium ion per subunit.</text>
</comment>
<comment type="subunit">
    <text evidence="1">Homodimer. Heterotetramer of two MnmE and two MnmG subunits.</text>
</comment>
<comment type="subcellular location">
    <subcellularLocation>
        <location evidence="1">Cytoplasm</location>
    </subcellularLocation>
</comment>
<comment type="similarity">
    <text evidence="1">Belongs to the TRAFAC class TrmE-Era-EngA-EngB-Septin-like GTPase superfamily. TrmE GTPase family.</text>
</comment>
<gene>
    <name evidence="1" type="primary">mnmE</name>
    <name evidence="1" type="synonym">trmE</name>
    <name type="ordered locus">GTNG_3440</name>
</gene>
<keyword id="KW-0963">Cytoplasm</keyword>
<keyword id="KW-0342">GTP-binding</keyword>
<keyword id="KW-0378">Hydrolase</keyword>
<keyword id="KW-0460">Magnesium</keyword>
<keyword id="KW-0479">Metal-binding</keyword>
<keyword id="KW-0547">Nucleotide-binding</keyword>
<keyword id="KW-0630">Potassium</keyword>
<keyword id="KW-0819">tRNA processing</keyword>
<reference key="1">
    <citation type="journal article" date="2007" name="Proc. Natl. Acad. Sci. U.S.A.">
        <title>Genome and proteome of long-chain alkane degrading Geobacillus thermodenitrificans NG80-2 isolated from a deep-subsurface oil reservoir.</title>
        <authorList>
            <person name="Feng L."/>
            <person name="Wang W."/>
            <person name="Cheng J."/>
            <person name="Ren Y."/>
            <person name="Zhao G."/>
            <person name="Gao C."/>
            <person name="Tang Y."/>
            <person name="Liu X."/>
            <person name="Han W."/>
            <person name="Peng X."/>
            <person name="Liu R."/>
            <person name="Wang L."/>
        </authorList>
    </citation>
    <scope>NUCLEOTIDE SEQUENCE [LARGE SCALE GENOMIC DNA]</scope>
    <source>
        <strain>NG80-2</strain>
    </source>
</reference>
<name>MNME_GEOTN</name>